<protein>
    <recommendedName>
        <fullName evidence="1">Probable tRNA sulfurtransferase</fullName>
        <ecNumber evidence="1">2.8.1.4</ecNumber>
    </recommendedName>
    <alternativeName>
        <fullName evidence="1">Sulfur carrier protein ThiS sulfurtransferase</fullName>
    </alternativeName>
    <alternativeName>
        <fullName evidence="1">Thiamine biosynthesis protein ThiI</fullName>
    </alternativeName>
    <alternativeName>
        <fullName evidence="1">tRNA 4-thiouridine synthase</fullName>
    </alternativeName>
</protein>
<evidence type="ECO:0000255" key="1">
    <source>
        <dbReference type="HAMAP-Rule" id="MF_00021"/>
    </source>
</evidence>
<organism>
    <name type="scientific">Listeria monocytogenes serovar 1/2a (strain ATCC BAA-679 / EGD-e)</name>
    <dbReference type="NCBI Taxonomy" id="169963"/>
    <lineage>
        <taxon>Bacteria</taxon>
        <taxon>Bacillati</taxon>
        <taxon>Bacillota</taxon>
        <taxon>Bacilli</taxon>
        <taxon>Bacillales</taxon>
        <taxon>Listeriaceae</taxon>
        <taxon>Listeria</taxon>
    </lineage>
</organism>
<keyword id="KW-0067">ATP-binding</keyword>
<keyword id="KW-0963">Cytoplasm</keyword>
<keyword id="KW-0547">Nucleotide-binding</keyword>
<keyword id="KW-1185">Reference proteome</keyword>
<keyword id="KW-0694">RNA-binding</keyword>
<keyword id="KW-0784">Thiamine biosynthesis</keyword>
<keyword id="KW-0808">Transferase</keyword>
<keyword id="KW-0820">tRNA-binding</keyword>
<reference key="1">
    <citation type="journal article" date="2001" name="Science">
        <title>Comparative genomics of Listeria species.</title>
        <authorList>
            <person name="Glaser P."/>
            <person name="Frangeul L."/>
            <person name="Buchrieser C."/>
            <person name="Rusniok C."/>
            <person name="Amend A."/>
            <person name="Baquero F."/>
            <person name="Berche P."/>
            <person name="Bloecker H."/>
            <person name="Brandt P."/>
            <person name="Chakraborty T."/>
            <person name="Charbit A."/>
            <person name="Chetouani F."/>
            <person name="Couve E."/>
            <person name="de Daruvar A."/>
            <person name="Dehoux P."/>
            <person name="Domann E."/>
            <person name="Dominguez-Bernal G."/>
            <person name="Duchaud E."/>
            <person name="Durant L."/>
            <person name="Dussurget O."/>
            <person name="Entian K.-D."/>
            <person name="Fsihi H."/>
            <person name="Garcia-del Portillo F."/>
            <person name="Garrido P."/>
            <person name="Gautier L."/>
            <person name="Goebel W."/>
            <person name="Gomez-Lopez N."/>
            <person name="Hain T."/>
            <person name="Hauf J."/>
            <person name="Jackson D."/>
            <person name="Jones L.-M."/>
            <person name="Kaerst U."/>
            <person name="Kreft J."/>
            <person name="Kuhn M."/>
            <person name="Kunst F."/>
            <person name="Kurapkat G."/>
            <person name="Madueno E."/>
            <person name="Maitournam A."/>
            <person name="Mata Vicente J."/>
            <person name="Ng E."/>
            <person name="Nedjari H."/>
            <person name="Nordsiek G."/>
            <person name="Novella S."/>
            <person name="de Pablos B."/>
            <person name="Perez-Diaz J.-C."/>
            <person name="Purcell R."/>
            <person name="Remmel B."/>
            <person name="Rose M."/>
            <person name="Schlueter T."/>
            <person name="Simoes N."/>
            <person name="Tierrez A."/>
            <person name="Vazquez-Boland J.-A."/>
            <person name="Voss H."/>
            <person name="Wehland J."/>
            <person name="Cossart P."/>
        </authorList>
    </citation>
    <scope>NUCLEOTIDE SEQUENCE [LARGE SCALE GENOMIC DNA]</scope>
    <source>
        <strain>ATCC BAA-679 / EGD-e</strain>
    </source>
</reference>
<sequence>MEFDRMLIRYGELSTKGKNRKQFVTKLAQNVKRAMTDLPEVRIHGERDRMYIILNGADYQLAEERLKPIFGIQSFSPAVRVNLDVEEVKAAALALVQDAHEENGTFKVAARRSHREFPLDSNEINQEIGAYVLQNMEDLTVNVKNPDVKLTIDVRKEGVFLSCRTILGAAGLPVGSSGRAMLMLSGGIDSPVAGYLAQKRGVEIEAVHFHSPPYTSEQAKQKAIDLAAKLAKYSGQVQMHIVPFTEIQEVIKQQIPESVIMTVTRRMMLRITDELRRKRNGLAIVNGESLGQVASQTLESMLAINAVTATPIIRPVVSMDKNEIIQIAQKIDTYNLSVQPFEDCCTIFTPPSPKTKPKLDKIEHYESFTDFDALIAKALDNIETISVNVAETAQVKDEFADLF</sequence>
<name>THII_LISMO</name>
<proteinExistence type="inferred from homology"/>
<feature type="chain" id="PRO_0000154847" description="Probable tRNA sulfurtransferase">
    <location>
        <begin position="1"/>
        <end position="403"/>
    </location>
</feature>
<feature type="domain" description="THUMP" evidence="1">
    <location>
        <begin position="60"/>
        <end position="165"/>
    </location>
</feature>
<feature type="binding site" evidence="1">
    <location>
        <begin position="183"/>
        <end position="184"/>
    </location>
    <ligand>
        <name>ATP</name>
        <dbReference type="ChEBI" id="CHEBI:30616"/>
    </ligand>
</feature>
<feature type="binding site" evidence="1">
    <location>
        <begin position="208"/>
        <end position="209"/>
    </location>
    <ligand>
        <name>ATP</name>
        <dbReference type="ChEBI" id="CHEBI:30616"/>
    </ligand>
</feature>
<feature type="binding site" evidence="1">
    <location>
        <position position="265"/>
    </location>
    <ligand>
        <name>ATP</name>
        <dbReference type="ChEBI" id="CHEBI:30616"/>
    </ligand>
</feature>
<feature type="binding site" evidence="1">
    <location>
        <position position="287"/>
    </location>
    <ligand>
        <name>ATP</name>
        <dbReference type="ChEBI" id="CHEBI:30616"/>
    </ligand>
</feature>
<feature type="binding site" evidence="1">
    <location>
        <position position="296"/>
    </location>
    <ligand>
        <name>ATP</name>
        <dbReference type="ChEBI" id="CHEBI:30616"/>
    </ligand>
</feature>
<gene>
    <name evidence="1" type="primary">thiI</name>
    <name type="ordered locus">lmo1592</name>
</gene>
<comment type="function">
    <text evidence="1">Catalyzes the ATP-dependent transfer of a sulfur to tRNA to produce 4-thiouridine in position 8 of tRNAs, which functions as a near-UV photosensor. Also catalyzes the transfer of sulfur to the sulfur carrier protein ThiS, forming ThiS-thiocarboxylate. This is a step in the synthesis of thiazole, in the thiamine biosynthesis pathway. The sulfur is donated as persulfide by IscS.</text>
</comment>
<comment type="catalytic activity">
    <reaction evidence="1">
        <text>[ThiI sulfur-carrier protein]-S-sulfanyl-L-cysteine + a uridine in tRNA + 2 reduced [2Fe-2S]-[ferredoxin] + ATP + H(+) = [ThiI sulfur-carrier protein]-L-cysteine + a 4-thiouridine in tRNA + 2 oxidized [2Fe-2S]-[ferredoxin] + AMP + diphosphate</text>
        <dbReference type="Rhea" id="RHEA:24176"/>
        <dbReference type="Rhea" id="RHEA-COMP:10000"/>
        <dbReference type="Rhea" id="RHEA-COMP:10001"/>
        <dbReference type="Rhea" id="RHEA-COMP:13337"/>
        <dbReference type="Rhea" id="RHEA-COMP:13338"/>
        <dbReference type="Rhea" id="RHEA-COMP:13339"/>
        <dbReference type="Rhea" id="RHEA-COMP:13340"/>
        <dbReference type="ChEBI" id="CHEBI:15378"/>
        <dbReference type="ChEBI" id="CHEBI:29950"/>
        <dbReference type="ChEBI" id="CHEBI:30616"/>
        <dbReference type="ChEBI" id="CHEBI:33019"/>
        <dbReference type="ChEBI" id="CHEBI:33737"/>
        <dbReference type="ChEBI" id="CHEBI:33738"/>
        <dbReference type="ChEBI" id="CHEBI:61963"/>
        <dbReference type="ChEBI" id="CHEBI:65315"/>
        <dbReference type="ChEBI" id="CHEBI:136798"/>
        <dbReference type="ChEBI" id="CHEBI:456215"/>
        <dbReference type="EC" id="2.8.1.4"/>
    </reaction>
</comment>
<comment type="catalytic activity">
    <reaction evidence="1">
        <text>[ThiS sulfur-carrier protein]-C-terminal Gly-Gly-AMP + S-sulfanyl-L-cysteinyl-[cysteine desulfurase] + AH2 = [ThiS sulfur-carrier protein]-C-terminal-Gly-aminoethanethioate + L-cysteinyl-[cysteine desulfurase] + A + AMP + 2 H(+)</text>
        <dbReference type="Rhea" id="RHEA:43340"/>
        <dbReference type="Rhea" id="RHEA-COMP:12157"/>
        <dbReference type="Rhea" id="RHEA-COMP:12158"/>
        <dbReference type="Rhea" id="RHEA-COMP:12910"/>
        <dbReference type="Rhea" id="RHEA-COMP:19908"/>
        <dbReference type="ChEBI" id="CHEBI:13193"/>
        <dbReference type="ChEBI" id="CHEBI:15378"/>
        <dbReference type="ChEBI" id="CHEBI:17499"/>
        <dbReference type="ChEBI" id="CHEBI:29950"/>
        <dbReference type="ChEBI" id="CHEBI:61963"/>
        <dbReference type="ChEBI" id="CHEBI:90618"/>
        <dbReference type="ChEBI" id="CHEBI:232372"/>
        <dbReference type="ChEBI" id="CHEBI:456215"/>
    </reaction>
</comment>
<comment type="pathway">
    <text evidence="1">Cofactor biosynthesis; thiamine diphosphate biosynthesis.</text>
</comment>
<comment type="subcellular location">
    <subcellularLocation>
        <location evidence="1">Cytoplasm</location>
    </subcellularLocation>
</comment>
<comment type="similarity">
    <text evidence="1">Belongs to the ThiI family.</text>
</comment>
<accession>Q8Y6U0</accession>
<dbReference type="EC" id="2.8.1.4" evidence="1"/>
<dbReference type="EMBL" id="AL591979">
    <property type="protein sequence ID" value="CAC99670.1"/>
    <property type="molecule type" value="Genomic_DNA"/>
</dbReference>
<dbReference type="PIR" id="AH1273">
    <property type="entry name" value="AH1273"/>
</dbReference>
<dbReference type="RefSeq" id="NP_465117.1">
    <property type="nucleotide sequence ID" value="NC_003210.1"/>
</dbReference>
<dbReference type="RefSeq" id="WP_003732553.1">
    <property type="nucleotide sequence ID" value="NZ_CP149495.1"/>
</dbReference>
<dbReference type="SMR" id="Q8Y6U0"/>
<dbReference type="STRING" id="169963.gene:17594249"/>
<dbReference type="PaxDb" id="169963-lmo1592"/>
<dbReference type="EnsemblBacteria" id="CAC99670">
    <property type="protein sequence ID" value="CAC99670"/>
    <property type="gene ID" value="CAC99670"/>
</dbReference>
<dbReference type="GeneID" id="986418"/>
<dbReference type="KEGG" id="lmo:lmo1592"/>
<dbReference type="PATRIC" id="fig|169963.11.peg.1634"/>
<dbReference type="eggNOG" id="COG0301">
    <property type="taxonomic scope" value="Bacteria"/>
</dbReference>
<dbReference type="HOGENOM" id="CLU_037952_4_0_9"/>
<dbReference type="OrthoDB" id="9773948at2"/>
<dbReference type="PhylomeDB" id="Q8Y6U0"/>
<dbReference type="BioCyc" id="LMON169963:LMO1592-MONOMER"/>
<dbReference type="UniPathway" id="UPA00060"/>
<dbReference type="Proteomes" id="UP000000817">
    <property type="component" value="Chromosome"/>
</dbReference>
<dbReference type="GO" id="GO:0005829">
    <property type="term" value="C:cytosol"/>
    <property type="evidence" value="ECO:0000318"/>
    <property type="project" value="GO_Central"/>
</dbReference>
<dbReference type="GO" id="GO:0005524">
    <property type="term" value="F:ATP binding"/>
    <property type="evidence" value="ECO:0007669"/>
    <property type="project" value="UniProtKB-UniRule"/>
</dbReference>
<dbReference type="GO" id="GO:0004810">
    <property type="term" value="F:CCA tRNA nucleotidyltransferase activity"/>
    <property type="evidence" value="ECO:0007669"/>
    <property type="project" value="InterPro"/>
</dbReference>
<dbReference type="GO" id="GO:0000049">
    <property type="term" value="F:tRNA binding"/>
    <property type="evidence" value="ECO:0007669"/>
    <property type="project" value="UniProtKB-UniRule"/>
</dbReference>
<dbReference type="GO" id="GO:0140741">
    <property type="term" value="F:tRNA-uracil-4 sulfurtransferase activity"/>
    <property type="evidence" value="ECO:0007669"/>
    <property type="project" value="UniProtKB-EC"/>
</dbReference>
<dbReference type="GO" id="GO:0009228">
    <property type="term" value="P:thiamine biosynthetic process"/>
    <property type="evidence" value="ECO:0007669"/>
    <property type="project" value="UniProtKB-KW"/>
</dbReference>
<dbReference type="GO" id="GO:0009229">
    <property type="term" value="P:thiamine diphosphate biosynthetic process"/>
    <property type="evidence" value="ECO:0007669"/>
    <property type="project" value="UniProtKB-UniRule"/>
</dbReference>
<dbReference type="GO" id="GO:0052837">
    <property type="term" value="P:thiazole biosynthetic process"/>
    <property type="evidence" value="ECO:0000318"/>
    <property type="project" value="GO_Central"/>
</dbReference>
<dbReference type="GO" id="GO:0002937">
    <property type="term" value="P:tRNA 4-thiouridine biosynthesis"/>
    <property type="evidence" value="ECO:0000318"/>
    <property type="project" value="GO_Central"/>
</dbReference>
<dbReference type="CDD" id="cd01712">
    <property type="entry name" value="PPase_ThiI"/>
    <property type="match status" value="1"/>
</dbReference>
<dbReference type="CDD" id="cd11716">
    <property type="entry name" value="THUMP_ThiI"/>
    <property type="match status" value="1"/>
</dbReference>
<dbReference type="FunFam" id="3.30.2130.30:FF:000011">
    <property type="entry name" value="Probable tRNA sulfurtransferase"/>
    <property type="match status" value="1"/>
</dbReference>
<dbReference type="FunFam" id="3.40.50.620:FF:000053">
    <property type="entry name" value="Probable tRNA sulfurtransferase"/>
    <property type="match status" value="1"/>
</dbReference>
<dbReference type="Gene3D" id="3.30.2130.30">
    <property type="match status" value="1"/>
</dbReference>
<dbReference type="Gene3D" id="3.40.50.620">
    <property type="entry name" value="HUPs"/>
    <property type="match status" value="1"/>
</dbReference>
<dbReference type="HAMAP" id="MF_00021">
    <property type="entry name" value="ThiI"/>
    <property type="match status" value="1"/>
</dbReference>
<dbReference type="InterPro" id="IPR014729">
    <property type="entry name" value="Rossmann-like_a/b/a_fold"/>
</dbReference>
<dbReference type="InterPro" id="IPR020536">
    <property type="entry name" value="ThiI_AANH"/>
</dbReference>
<dbReference type="InterPro" id="IPR054173">
    <property type="entry name" value="ThiI_fer"/>
</dbReference>
<dbReference type="InterPro" id="IPR049961">
    <property type="entry name" value="ThiI_N"/>
</dbReference>
<dbReference type="InterPro" id="IPR004114">
    <property type="entry name" value="THUMP_dom"/>
</dbReference>
<dbReference type="InterPro" id="IPR049962">
    <property type="entry name" value="THUMP_ThiI"/>
</dbReference>
<dbReference type="InterPro" id="IPR003720">
    <property type="entry name" value="tRNA_STrfase"/>
</dbReference>
<dbReference type="InterPro" id="IPR050102">
    <property type="entry name" value="tRNA_sulfurtransferase_ThiI"/>
</dbReference>
<dbReference type="NCBIfam" id="TIGR00342">
    <property type="entry name" value="tRNA uracil 4-sulfurtransferase ThiI"/>
    <property type="match status" value="1"/>
</dbReference>
<dbReference type="PANTHER" id="PTHR43209">
    <property type="entry name" value="TRNA SULFURTRANSFERASE"/>
    <property type="match status" value="1"/>
</dbReference>
<dbReference type="PANTHER" id="PTHR43209:SF1">
    <property type="entry name" value="TRNA SULFURTRANSFERASE"/>
    <property type="match status" value="1"/>
</dbReference>
<dbReference type="Pfam" id="PF02568">
    <property type="entry name" value="ThiI"/>
    <property type="match status" value="1"/>
</dbReference>
<dbReference type="Pfam" id="PF22025">
    <property type="entry name" value="ThiI_fer"/>
    <property type="match status" value="1"/>
</dbReference>
<dbReference type="Pfam" id="PF02926">
    <property type="entry name" value="THUMP"/>
    <property type="match status" value="1"/>
</dbReference>
<dbReference type="SMART" id="SM00981">
    <property type="entry name" value="THUMP"/>
    <property type="match status" value="1"/>
</dbReference>
<dbReference type="SUPFAM" id="SSF52402">
    <property type="entry name" value="Adenine nucleotide alpha hydrolases-like"/>
    <property type="match status" value="1"/>
</dbReference>
<dbReference type="SUPFAM" id="SSF143437">
    <property type="entry name" value="THUMP domain-like"/>
    <property type="match status" value="1"/>
</dbReference>
<dbReference type="PROSITE" id="PS51165">
    <property type="entry name" value="THUMP"/>
    <property type="match status" value="1"/>
</dbReference>